<evidence type="ECO:0000255" key="1">
    <source>
        <dbReference type="HAMAP-Rule" id="MF_00031"/>
    </source>
</evidence>
<accession>Q817W3</accession>
<dbReference type="EMBL" id="AE016877">
    <property type="protein sequence ID" value="AAP11328.1"/>
    <property type="molecule type" value="Genomic_DNA"/>
</dbReference>
<dbReference type="RefSeq" id="NP_834127.1">
    <property type="nucleotide sequence ID" value="NC_004722.1"/>
</dbReference>
<dbReference type="RefSeq" id="WP_000464511.1">
    <property type="nucleotide sequence ID" value="NZ_CP138336.1"/>
</dbReference>
<dbReference type="SMR" id="Q817W3"/>
<dbReference type="STRING" id="226900.BC_4415"/>
<dbReference type="GeneID" id="83638132"/>
<dbReference type="KEGG" id="bce:BC4415"/>
<dbReference type="PATRIC" id="fig|226900.8.peg.4566"/>
<dbReference type="HOGENOM" id="CLU_087936_1_0_9"/>
<dbReference type="OrthoDB" id="5293449at2"/>
<dbReference type="Proteomes" id="UP000001417">
    <property type="component" value="Chromosome"/>
</dbReference>
<dbReference type="GO" id="GO:0005737">
    <property type="term" value="C:cytoplasm"/>
    <property type="evidence" value="ECO:0007669"/>
    <property type="project" value="UniProtKB-SubCell"/>
</dbReference>
<dbReference type="GO" id="GO:0009379">
    <property type="term" value="C:Holliday junction helicase complex"/>
    <property type="evidence" value="ECO:0007669"/>
    <property type="project" value="InterPro"/>
</dbReference>
<dbReference type="GO" id="GO:0048476">
    <property type="term" value="C:Holliday junction resolvase complex"/>
    <property type="evidence" value="ECO:0007669"/>
    <property type="project" value="UniProtKB-UniRule"/>
</dbReference>
<dbReference type="GO" id="GO:0005524">
    <property type="term" value="F:ATP binding"/>
    <property type="evidence" value="ECO:0007669"/>
    <property type="project" value="InterPro"/>
</dbReference>
<dbReference type="GO" id="GO:0000400">
    <property type="term" value="F:four-way junction DNA binding"/>
    <property type="evidence" value="ECO:0007669"/>
    <property type="project" value="UniProtKB-UniRule"/>
</dbReference>
<dbReference type="GO" id="GO:0009378">
    <property type="term" value="F:four-way junction helicase activity"/>
    <property type="evidence" value="ECO:0000318"/>
    <property type="project" value="GO_Central"/>
</dbReference>
<dbReference type="GO" id="GO:0006310">
    <property type="term" value="P:DNA recombination"/>
    <property type="evidence" value="ECO:0007669"/>
    <property type="project" value="UniProtKB-UniRule"/>
</dbReference>
<dbReference type="GO" id="GO:0006281">
    <property type="term" value="P:DNA repair"/>
    <property type="evidence" value="ECO:0007669"/>
    <property type="project" value="UniProtKB-UniRule"/>
</dbReference>
<dbReference type="GO" id="GO:0009432">
    <property type="term" value="P:SOS response"/>
    <property type="evidence" value="ECO:0000318"/>
    <property type="project" value="GO_Central"/>
</dbReference>
<dbReference type="CDD" id="cd14332">
    <property type="entry name" value="UBA_RuvA_C"/>
    <property type="match status" value="1"/>
</dbReference>
<dbReference type="Gene3D" id="1.10.150.20">
    <property type="entry name" value="5' to 3' exonuclease, C-terminal subdomain"/>
    <property type="match status" value="1"/>
</dbReference>
<dbReference type="Gene3D" id="1.10.8.10">
    <property type="entry name" value="DNA helicase RuvA subunit, C-terminal domain"/>
    <property type="match status" value="1"/>
</dbReference>
<dbReference type="Gene3D" id="2.40.50.140">
    <property type="entry name" value="Nucleic acid-binding proteins"/>
    <property type="match status" value="1"/>
</dbReference>
<dbReference type="HAMAP" id="MF_00031">
    <property type="entry name" value="DNA_HJ_migration_RuvA"/>
    <property type="match status" value="1"/>
</dbReference>
<dbReference type="InterPro" id="IPR013849">
    <property type="entry name" value="DNA_helicase_Holl-junc_RuvA_I"/>
</dbReference>
<dbReference type="InterPro" id="IPR003583">
    <property type="entry name" value="Hlx-hairpin-Hlx_DNA-bd_motif"/>
</dbReference>
<dbReference type="InterPro" id="IPR012340">
    <property type="entry name" value="NA-bd_OB-fold"/>
</dbReference>
<dbReference type="InterPro" id="IPR000085">
    <property type="entry name" value="RuvA"/>
</dbReference>
<dbReference type="InterPro" id="IPR010994">
    <property type="entry name" value="RuvA_2-like"/>
</dbReference>
<dbReference type="InterPro" id="IPR011114">
    <property type="entry name" value="RuvA_C"/>
</dbReference>
<dbReference type="InterPro" id="IPR036267">
    <property type="entry name" value="RuvA_C_sf"/>
</dbReference>
<dbReference type="NCBIfam" id="TIGR00084">
    <property type="entry name" value="ruvA"/>
    <property type="match status" value="1"/>
</dbReference>
<dbReference type="Pfam" id="PF14520">
    <property type="entry name" value="HHH_5"/>
    <property type="match status" value="1"/>
</dbReference>
<dbReference type="Pfam" id="PF07499">
    <property type="entry name" value="RuvA_C"/>
    <property type="match status" value="1"/>
</dbReference>
<dbReference type="Pfam" id="PF01330">
    <property type="entry name" value="RuvA_N"/>
    <property type="match status" value="1"/>
</dbReference>
<dbReference type="SMART" id="SM00278">
    <property type="entry name" value="HhH1"/>
    <property type="match status" value="2"/>
</dbReference>
<dbReference type="SUPFAM" id="SSF46929">
    <property type="entry name" value="DNA helicase RuvA subunit, C-terminal domain"/>
    <property type="match status" value="1"/>
</dbReference>
<dbReference type="SUPFAM" id="SSF50249">
    <property type="entry name" value="Nucleic acid-binding proteins"/>
    <property type="match status" value="1"/>
</dbReference>
<dbReference type="SUPFAM" id="SSF47781">
    <property type="entry name" value="RuvA domain 2-like"/>
    <property type="match status" value="1"/>
</dbReference>
<keyword id="KW-0963">Cytoplasm</keyword>
<keyword id="KW-0227">DNA damage</keyword>
<keyword id="KW-0233">DNA recombination</keyword>
<keyword id="KW-0234">DNA repair</keyword>
<keyword id="KW-0238">DNA-binding</keyword>
<keyword id="KW-1185">Reference proteome</keyword>
<name>RUVA_BACCR</name>
<comment type="function">
    <text evidence="1">The RuvA-RuvB-RuvC complex processes Holliday junction (HJ) DNA during genetic recombination and DNA repair, while the RuvA-RuvB complex plays an important role in the rescue of blocked DNA replication forks via replication fork reversal (RFR). RuvA specifically binds to HJ cruciform DNA, conferring on it an open structure. The RuvB hexamer acts as an ATP-dependent pump, pulling dsDNA into and through the RuvAB complex. HJ branch migration allows RuvC to scan DNA until it finds its consensus sequence, where it cleaves and resolves the cruciform DNA.</text>
</comment>
<comment type="subunit">
    <text evidence="1">Homotetramer. Forms an RuvA(8)-RuvB(12)-Holliday junction (HJ) complex. HJ DNA is sandwiched between 2 RuvA tetramers; dsDNA enters through RuvA and exits via RuvB. An RuvB hexamer assembles on each DNA strand where it exits the tetramer. Each RuvB hexamer is contacted by two RuvA subunits (via domain III) on 2 adjacent RuvB subunits; this complex drives branch migration. In the full resolvosome a probable DNA-RuvA(4)-RuvB(12)-RuvC(2) complex forms which resolves the HJ.</text>
</comment>
<comment type="subcellular location">
    <subcellularLocation>
        <location evidence="1">Cytoplasm</location>
    </subcellularLocation>
</comment>
<comment type="domain">
    <text evidence="1">Has three domains with a flexible linker between the domains II and III and assumes an 'L' shape. Domain III is highly mobile and contacts RuvB.</text>
</comment>
<comment type="similarity">
    <text evidence="1">Belongs to the RuvA family.</text>
</comment>
<sequence length="205" mass="23166">MFEYVTGYVEYVGPEYVVIDHNGIGYQIFTPNPYVFQRSKQEIRVYTYHYVREDIMALYGFKTREERLLFTKLLGVSGIGPKGALAILASGQTGQVVQAIEHEDEKFLVKFPGVGKKTARQMILDLKGKLADVVPDAFVDLFSDTERFDEKKGSSAELDEALEALRALGYAEREVSRVVPELLKESLTTDQYIKKALSLLLNGKR</sequence>
<proteinExistence type="inferred from homology"/>
<reference key="1">
    <citation type="journal article" date="2003" name="Nature">
        <title>Genome sequence of Bacillus cereus and comparative analysis with Bacillus anthracis.</title>
        <authorList>
            <person name="Ivanova N."/>
            <person name="Sorokin A."/>
            <person name="Anderson I."/>
            <person name="Galleron N."/>
            <person name="Candelon B."/>
            <person name="Kapatral V."/>
            <person name="Bhattacharyya A."/>
            <person name="Reznik G."/>
            <person name="Mikhailova N."/>
            <person name="Lapidus A."/>
            <person name="Chu L."/>
            <person name="Mazur M."/>
            <person name="Goltsman E."/>
            <person name="Larsen N."/>
            <person name="D'Souza M."/>
            <person name="Walunas T."/>
            <person name="Grechkin Y."/>
            <person name="Pusch G."/>
            <person name="Haselkorn R."/>
            <person name="Fonstein M."/>
            <person name="Ehrlich S.D."/>
            <person name="Overbeek R."/>
            <person name="Kyrpides N.C."/>
        </authorList>
    </citation>
    <scope>NUCLEOTIDE SEQUENCE [LARGE SCALE GENOMIC DNA]</scope>
    <source>
        <strain>ATCC 14579 / DSM 31 / CCUG 7414 / JCM 2152 / NBRC 15305 / NCIMB 9373 / NCTC 2599 / NRRL B-3711</strain>
    </source>
</reference>
<protein>
    <recommendedName>
        <fullName evidence="1">Holliday junction branch migration complex subunit RuvA</fullName>
    </recommendedName>
</protein>
<gene>
    <name evidence="1" type="primary">ruvA</name>
    <name type="ordered locus">BC_4415</name>
</gene>
<organism>
    <name type="scientific">Bacillus cereus (strain ATCC 14579 / DSM 31 / CCUG 7414 / JCM 2152 / NBRC 15305 / NCIMB 9373 / NCTC 2599 / NRRL B-3711)</name>
    <dbReference type="NCBI Taxonomy" id="226900"/>
    <lineage>
        <taxon>Bacteria</taxon>
        <taxon>Bacillati</taxon>
        <taxon>Bacillota</taxon>
        <taxon>Bacilli</taxon>
        <taxon>Bacillales</taxon>
        <taxon>Bacillaceae</taxon>
        <taxon>Bacillus</taxon>
        <taxon>Bacillus cereus group</taxon>
    </lineage>
</organism>
<feature type="chain" id="PRO_0000094600" description="Holliday junction branch migration complex subunit RuvA">
    <location>
        <begin position="1"/>
        <end position="205"/>
    </location>
</feature>
<feature type="region of interest" description="Domain I" evidence="1">
    <location>
        <begin position="1"/>
        <end position="62"/>
    </location>
</feature>
<feature type="region of interest" description="Domain II" evidence="1">
    <location>
        <begin position="63"/>
        <end position="141"/>
    </location>
</feature>
<feature type="region of interest" description="Flexible linker" evidence="1">
    <location>
        <begin position="142"/>
        <end position="152"/>
    </location>
</feature>
<feature type="region of interest" description="Domain III" evidence="1">
    <location>
        <begin position="153"/>
        <end position="205"/>
    </location>
</feature>